<name>OFUT3_CHICK</name>
<proteinExistence type="evidence at transcript level"/>
<reference key="1">
    <citation type="submission" date="2002-12" db="EMBL/GenBank/DDBJ databases">
        <title>Cloning expression and genomic organization of a new human alpha3-fucosyltransferase (FUT10).</title>
        <authorList>
            <person name="Candelier J.-J."/>
            <person name="Martinez-Duncker I."/>
            <person name="Oriol R."/>
            <person name="Mollicone R."/>
        </authorList>
    </citation>
    <scope>NUCLEOTIDE SEQUENCE [MRNA]</scope>
</reference>
<sequence>MVRMRRKRLWASCICFAAFFFLLVTLQVITELGNSENKAPAVSSLHSGPLKPDERHASQLKKNELYSNFRTEPDTDHYPILLWWSPLTGETGRSGQCGEDVCFFTINKTYQHSQMTRAFLFYGTDFSIDSLPLPRKDHHDWALFHEESPKNNYKLFHEPAITLFNHTATFSRHSHLPLTTQYLESIEVLRSLRHMIPVQMKNSLRKRLAPLVYVQSDCNAPSDRDSYVRELMCHIEVDSYGECLHNRDLPQHLRNPSAMDDGNFYKILAQYKFILAFENAICEDYITEKLWRPLMLGVVPVYFGSPSIIDWLPSNKSAILVSSFSHPRELARYIKTLDQNDQEYEAYLEWKLKGDISNPRLLTAMKERKWGVQDVTQDNYIDTFECMVCNRVWENIRREEKGWLPQRWSAQVNHLNCPKPEAFWFSSSNPSQSSLQEMWIASFEQSKKEAWALRQLVERNRNFTTQEFWMLVFKQ</sequence>
<evidence type="ECO:0000250" key="1">
    <source>
        <dbReference type="UniProtKB" id="Q11130"/>
    </source>
</evidence>
<evidence type="ECO:0000250" key="2">
    <source>
        <dbReference type="UniProtKB" id="Q6P4F1"/>
    </source>
</evidence>
<evidence type="ECO:0000255" key="3"/>
<evidence type="ECO:0000305" key="4"/>
<comment type="function">
    <text evidence="2">Protein O-fucosyltransferase that specifically catalyzes O-fucosylation of serine or threonine residues in EMI domains of target proteins. Attaches fucose through an O-glycosidic linkage. O-fucosylation of EMI domain-containing proteins may be required for facilitating protein folding and secretion.</text>
</comment>
<comment type="catalytic activity">
    <reaction evidence="2">
        <text>L-threonyl-[protein] + GDP-beta-L-fucose = 3-O-(alpha-L-fucosyl)-L-threonyl-[protein] + GDP + H(+)</text>
        <dbReference type="Rhea" id="RHEA:70491"/>
        <dbReference type="Rhea" id="RHEA-COMP:11060"/>
        <dbReference type="Rhea" id="RHEA-COMP:17915"/>
        <dbReference type="ChEBI" id="CHEBI:15378"/>
        <dbReference type="ChEBI" id="CHEBI:30013"/>
        <dbReference type="ChEBI" id="CHEBI:57273"/>
        <dbReference type="ChEBI" id="CHEBI:58189"/>
        <dbReference type="ChEBI" id="CHEBI:189631"/>
        <dbReference type="EC" id="2.4.1.221"/>
    </reaction>
    <physiologicalReaction direction="left-to-right" evidence="2">
        <dbReference type="Rhea" id="RHEA:70492"/>
    </physiologicalReaction>
</comment>
<comment type="catalytic activity">
    <reaction evidence="2">
        <text>L-seryl-[protein] + GDP-beta-L-fucose = 3-O-(alpha-L-fucosyl)-L-seryl-[protein] + GDP + H(+)</text>
        <dbReference type="Rhea" id="RHEA:63644"/>
        <dbReference type="Rhea" id="RHEA-COMP:9863"/>
        <dbReference type="Rhea" id="RHEA-COMP:17914"/>
        <dbReference type="ChEBI" id="CHEBI:15378"/>
        <dbReference type="ChEBI" id="CHEBI:29999"/>
        <dbReference type="ChEBI" id="CHEBI:57273"/>
        <dbReference type="ChEBI" id="CHEBI:58189"/>
        <dbReference type="ChEBI" id="CHEBI:189632"/>
        <dbReference type="EC" id="2.4.1.221"/>
    </reaction>
    <physiologicalReaction direction="left-to-right" evidence="2">
        <dbReference type="Rhea" id="RHEA:63645"/>
    </physiologicalReaction>
</comment>
<comment type="pathway">
    <text evidence="2">Protein modification; protein glycosylation.</text>
</comment>
<comment type="subcellular location">
    <subcellularLocation>
        <location evidence="2">Endoplasmic reticulum membrane</location>
        <topology evidence="3">Single-pass type II membrane protein</topology>
    </subcellularLocation>
</comment>
<comment type="similarity">
    <text evidence="4">Belongs to the glycosyltransferase 10 family.</text>
</comment>
<comment type="sequence caution" evidence="4">
    <conflict type="frameshift">
        <sequence resource="EMBL-CDS" id="CAD59689"/>
    </conflict>
</comment>
<feature type="chain" id="PRO_0000299005" description="GDP-fucose protein O-fucosyltransferase 3">
    <location>
        <begin position="1"/>
        <end position="475"/>
    </location>
</feature>
<feature type="topological domain" description="Cytoplasmic" evidence="3">
    <location>
        <begin position="1"/>
        <end position="8"/>
    </location>
</feature>
<feature type="transmembrane region" description="Helical; Signal-anchor for type II membrane protein" evidence="3">
    <location>
        <begin position="9"/>
        <end position="29"/>
    </location>
</feature>
<feature type="topological domain" description="Lumenal" evidence="3">
    <location>
        <begin position="30"/>
        <end position="475"/>
    </location>
</feature>
<feature type="glycosylation site" description="N-linked (GlcNAc...) asparagine" evidence="3">
    <location>
        <position position="107"/>
    </location>
</feature>
<feature type="glycosylation site" description="N-linked (GlcNAc...) asparagine" evidence="3">
    <location>
        <position position="165"/>
    </location>
</feature>
<feature type="glycosylation site" description="N-linked (GlcNAc...) asparagine" evidence="3">
    <location>
        <position position="315"/>
    </location>
</feature>
<feature type="glycosylation site" description="N-linked (GlcNAc...) asparagine" evidence="3">
    <location>
        <position position="462"/>
    </location>
</feature>
<feature type="disulfide bond" evidence="1">
    <location>
        <begin position="386"/>
        <end position="389"/>
    </location>
</feature>
<gene>
    <name type="primary">FUT10</name>
    <name evidence="2" type="synonym">POFUT3</name>
</gene>
<dbReference type="EC" id="2.4.1.221" evidence="2"/>
<dbReference type="EMBL" id="AJ535692">
    <property type="protein sequence ID" value="CAD59689.1"/>
    <property type="status" value="ALT_FRAME"/>
    <property type="molecule type" value="mRNA"/>
</dbReference>
<dbReference type="SMR" id="Q8AWB5"/>
<dbReference type="FunCoup" id="Q8AWB5">
    <property type="interactions" value="313"/>
</dbReference>
<dbReference type="STRING" id="9031.ENSGALP00000024794"/>
<dbReference type="CAZy" id="GT10">
    <property type="family name" value="Glycosyltransferase Family 10"/>
</dbReference>
<dbReference type="GlyCosmos" id="Q8AWB5">
    <property type="glycosylation" value="4 sites, No reported glycans"/>
</dbReference>
<dbReference type="GlyGen" id="Q8AWB5">
    <property type="glycosylation" value="4 sites"/>
</dbReference>
<dbReference type="PaxDb" id="9031-ENSGALP00000036990"/>
<dbReference type="VEuPathDB" id="HostDB:geneid_395073"/>
<dbReference type="eggNOG" id="KOG2619">
    <property type="taxonomic scope" value="Eukaryota"/>
</dbReference>
<dbReference type="InParanoid" id="Q8AWB5"/>
<dbReference type="OrthoDB" id="9993460at2759"/>
<dbReference type="PhylomeDB" id="Q8AWB5"/>
<dbReference type="UniPathway" id="UPA00378"/>
<dbReference type="Proteomes" id="UP000000539">
    <property type="component" value="Unassembled WGS sequence"/>
</dbReference>
<dbReference type="GO" id="GO:0005783">
    <property type="term" value="C:endoplasmic reticulum"/>
    <property type="evidence" value="ECO:0000250"/>
    <property type="project" value="UniProtKB"/>
</dbReference>
<dbReference type="GO" id="GO:0005789">
    <property type="term" value="C:endoplasmic reticulum membrane"/>
    <property type="evidence" value="ECO:0007669"/>
    <property type="project" value="UniProtKB-SubCell"/>
</dbReference>
<dbReference type="GO" id="GO:0000139">
    <property type="term" value="C:Golgi membrane"/>
    <property type="evidence" value="ECO:0007669"/>
    <property type="project" value="InterPro"/>
</dbReference>
<dbReference type="GO" id="GO:0046920">
    <property type="term" value="F:alpha-(1-&gt;3)-fucosyltransferase activity"/>
    <property type="evidence" value="ECO:0000318"/>
    <property type="project" value="GO_Central"/>
</dbReference>
<dbReference type="GO" id="GO:0046922">
    <property type="term" value="F:peptide-O-fucosyltransferase activity"/>
    <property type="evidence" value="ECO:0000250"/>
    <property type="project" value="UniProtKB"/>
</dbReference>
<dbReference type="GO" id="GO:0036065">
    <property type="term" value="P:fucosylation"/>
    <property type="evidence" value="ECO:0000318"/>
    <property type="project" value="GO_Central"/>
</dbReference>
<dbReference type="GO" id="GO:0050714">
    <property type="term" value="P:positive regulation of protein secretion"/>
    <property type="evidence" value="ECO:0000250"/>
    <property type="project" value="UniProtKB"/>
</dbReference>
<dbReference type="FunFam" id="3.40.50.11660:FF:000002">
    <property type="entry name" value="Alpha-(1,3)-fucosyltransferase"/>
    <property type="match status" value="1"/>
</dbReference>
<dbReference type="Gene3D" id="3.40.50.11660">
    <property type="entry name" value="Glycosyl transferase family 10, C-terminal domain"/>
    <property type="match status" value="1"/>
</dbReference>
<dbReference type="InterPro" id="IPR017176">
    <property type="entry name" value="Alpha-1_3-FUT_met"/>
</dbReference>
<dbReference type="InterPro" id="IPR055270">
    <property type="entry name" value="Glyco_tran_10_C"/>
</dbReference>
<dbReference type="InterPro" id="IPR031481">
    <property type="entry name" value="Glyco_tran_10_N"/>
</dbReference>
<dbReference type="InterPro" id="IPR001503">
    <property type="entry name" value="Glyco_trans_10"/>
</dbReference>
<dbReference type="InterPro" id="IPR038577">
    <property type="entry name" value="GT10-like_C_sf"/>
</dbReference>
<dbReference type="PANTHER" id="PTHR11929">
    <property type="entry name" value="ALPHA- 1,3 -FUCOSYLTRANSFERASE"/>
    <property type="match status" value="1"/>
</dbReference>
<dbReference type="PANTHER" id="PTHR11929:SF194">
    <property type="entry name" value="ALPHA-(1,3)-FUCOSYLTRANSFERASE 10"/>
    <property type="match status" value="1"/>
</dbReference>
<dbReference type="Pfam" id="PF17039">
    <property type="entry name" value="Glyco_tran_10_N"/>
    <property type="match status" value="1"/>
</dbReference>
<dbReference type="Pfam" id="PF00852">
    <property type="entry name" value="Glyco_transf_10"/>
    <property type="match status" value="1"/>
</dbReference>
<dbReference type="PIRSF" id="PIRSF037332">
    <property type="entry name" value="Alpha1_3FUT_met"/>
    <property type="match status" value="1"/>
</dbReference>
<dbReference type="SUPFAM" id="SSF53756">
    <property type="entry name" value="UDP-Glycosyltransferase/glycogen phosphorylase"/>
    <property type="match status" value="1"/>
</dbReference>
<organism>
    <name type="scientific">Gallus gallus</name>
    <name type="common">Chicken</name>
    <dbReference type="NCBI Taxonomy" id="9031"/>
    <lineage>
        <taxon>Eukaryota</taxon>
        <taxon>Metazoa</taxon>
        <taxon>Chordata</taxon>
        <taxon>Craniata</taxon>
        <taxon>Vertebrata</taxon>
        <taxon>Euteleostomi</taxon>
        <taxon>Archelosauria</taxon>
        <taxon>Archosauria</taxon>
        <taxon>Dinosauria</taxon>
        <taxon>Saurischia</taxon>
        <taxon>Theropoda</taxon>
        <taxon>Coelurosauria</taxon>
        <taxon>Aves</taxon>
        <taxon>Neognathae</taxon>
        <taxon>Galloanserae</taxon>
        <taxon>Galliformes</taxon>
        <taxon>Phasianidae</taxon>
        <taxon>Phasianinae</taxon>
        <taxon>Gallus</taxon>
    </lineage>
</organism>
<accession>Q8AWB5</accession>
<keyword id="KW-1015">Disulfide bond</keyword>
<keyword id="KW-0256">Endoplasmic reticulum</keyword>
<keyword id="KW-0325">Glycoprotein</keyword>
<keyword id="KW-0328">Glycosyltransferase</keyword>
<keyword id="KW-0472">Membrane</keyword>
<keyword id="KW-1185">Reference proteome</keyword>
<keyword id="KW-0735">Signal-anchor</keyword>
<keyword id="KW-0808">Transferase</keyword>
<keyword id="KW-0812">Transmembrane</keyword>
<keyword id="KW-1133">Transmembrane helix</keyword>
<protein>
    <recommendedName>
        <fullName>GDP-fucose protein O-fucosyltransferase 3</fullName>
        <ecNumber evidence="2">2.4.1.221</ecNumber>
    </recommendedName>
    <alternativeName>
        <fullName>Fucosyltransferase X</fullName>
        <shortName>Fuc-TX</shortName>
        <shortName>FucT-X</shortName>
    </alternativeName>
    <alternativeName>
        <fullName>Galactoside 3-L-fucosyltransferase 10</fullName>
        <shortName>Fucosyltransferase 10</shortName>
    </alternativeName>
</protein>